<comment type="function">
    <text>Restriction of 5-methyl and 5-hydroxymethylcytosines at the specific DNA sequence 5'-C(me)CGG-3'.</text>
</comment>
<comment type="miscellaneous">
    <text evidence="1 2 3 4">Encoded by the SOS-inducible cryptic lambdoid prophage e14 (PubMed:16738553, PubMed:1938927, PubMed:9278503, Ref.2). UV treatment leads to prophage excision and reduced levels of McrA (PubMed:1938927, Ref.2).</text>
</comment>
<accession>P24200</accession>
<protein>
    <recommendedName>
        <fullName evidence="5">Type IV methyl-directed restriction enzyme EcoKMcrA</fullName>
        <shortName evidence="5">EcoKMcrA</shortName>
        <ecNumber>3.1.21.-</ecNumber>
    </recommendedName>
    <alternativeName>
        <fullName>5-methylcytosine-specific restriction enzyme A</fullName>
    </alternativeName>
</protein>
<keyword id="KW-0002">3D-structure</keyword>
<keyword id="KW-0255">Endonuclease</keyword>
<keyword id="KW-0378">Hydrolase</keyword>
<keyword id="KW-0540">Nuclease</keyword>
<keyword id="KW-1185">Reference proteome</keyword>
<keyword id="KW-0680">Restriction system</keyword>
<reference key="1">
    <citation type="journal article" date="1991" name="J. Bacteriol.">
        <title>Cloning and structural characterization of the mcrA locus of Escherichia coli.</title>
        <authorList>
            <person name="Hiom K.J."/>
            <person name="Sedgwick S.G."/>
        </authorList>
    </citation>
    <scope>NUCLEOTIDE SEQUENCE [GENOMIC DNA]</scope>
</reference>
<reference key="2">
    <citation type="journal article" date="1992" name="J. Biosci.">
        <title>Molecular cloning and sequencing of mcrA locus and identification of McrA protein in Escherichia coli.</title>
        <authorList>
            <person name="Ramalingam R."/>
            <person name="Prasad R."/>
            <person name="Shivapriya R."/>
            <person name="Dharmalingam K."/>
        </authorList>
    </citation>
    <scope>NUCLEOTIDE SEQUENCE [GENOMIC DNA]</scope>
    <source>
        <strain>K12 / W3110 / ATCC 27325 / DSM 5911</strain>
    </source>
</reference>
<reference key="3">
    <citation type="journal article" date="1996" name="DNA Res.">
        <title>A 718-kb DNA sequence of the Escherichia coli K-12 genome corresponding to the 12.7-28.0 min region on the linkage map.</title>
        <authorList>
            <person name="Oshima T."/>
            <person name="Aiba H."/>
            <person name="Baba T."/>
            <person name="Fujita K."/>
            <person name="Hayashi K."/>
            <person name="Honjo A."/>
            <person name="Ikemoto K."/>
            <person name="Inada T."/>
            <person name="Itoh T."/>
            <person name="Kajihara M."/>
            <person name="Kanai K."/>
            <person name="Kashimoto K."/>
            <person name="Kimura S."/>
            <person name="Kitagawa M."/>
            <person name="Makino K."/>
            <person name="Masuda S."/>
            <person name="Miki T."/>
            <person name="Mizobuchi K."/>
            <person name="Mori H."/>
            <person name="Motomura K."/>
            <person name="Nakamura Y."/>
            <person name="Nashimoto H."/>
            <person name="Nishio Y."/>
            <person name="Saito N."/>
            <person name="Sampei G."/>
            <person name="Seki Y."/>
            <person name="Tagami H."/>
            <person name="Takemoto K."/>
            <person name="Wada C."/>
            <person name="Yamamoto Y."/>
            <person name="Yano M."/>
            <person name="Horiuchi T."/>
        </authorList>
    </citation>
    <scope>NUCLEOTIDE SEQUENCE [LARGE SCALE GENOMIC DNA]</scope>
    <source>
        <strain>K12 / W3110 / ATCC 27325 / DSM 5911</strain>
    </source>
</reference>
<reference key="4">
    <citation type="journal article" date="1997" name="Science">
        <title>The complete genome sequence of Escherichia coli K-12.</title>
        <authorList>
            <person name="Blattner F.R."/>
            <person name="Plunkett G. III"/>
            <person name="Bloch C.A."/>
            <person name="Perna N.T."/>
            <person name="Burland V."/>
            <person name="Riley M."/>
            <person name="Collado-Vides J."/>
            <person name="Glasner J.D."/>
            <person name="Rode C.K."/>
            <person name="Mayhew G.F."/>
            <person name="Gregor J."/>
            <person name="Davis N.W."/>
            <person name="Kirkpatrick H.A."/>
            <person name="Goeden M.A."/>
            <person name="Rose D.J."/>
            <person name="Mau B."/>
            <person name="Shao Y."/>
        </authorList>
    </citation>
    <scope>NUCLEOTIDE SEQUENCE [LARGE SCALE GENOMIC DNA]</scope>
    <source>
        <strain>K12 / MG1655 / ATCC 47076</strain>
    </source>
</reference>
<reference key="5">
    <citation type="journal article" date="2006" name="Mol. Syst. Biol.">
        <title>Highly accurate genome sequences of Escherichia coli K-12 strains MG1655 and W3110.</title>
        <authorList>
            <person name="Hayashi K."/>
            <person name="Morooka N."/>
            <person name="Yamamoto Y."/>
            <person name="Fujita K."/>
            <person name="Isono K."/>
            <person name="Choi S."/>
            <person name="Ohtsubo E."/>
            <person name="Baba T."/>
            <person name="Wanner B.L."/>
            <person name="Mori H."/>
            <person name="Horiuchi T."/>
        </authorList>
    </citation>
    <scope>NUCLEOTIDE SEQUENCE [LARGE SCALE GENOMIC DNA]</scope>
    <source>
        <strain>K12 / W3110 / ATCC 27325 / DSM 5911</strain>
    </source>
</reference>
<reference key="6">
    <citation type="journal article" date="2003" name="Nucleic Acids Res.">
        <title>A nomenclature for restriction enzymes, DNA methyltransferases, homing endonucleases and their genes.</title>
        <authorList>
            <person name="Roberts R.J."/>
            <person name="Belfort M."/>
            <person name="Bestor T."/>
            <person name="Bhagwat A.S."/>
            <person name="Bickle T.A."/>
            <person name="Bitinaite J."/>
            <person name="Blumenthal R.M."/>
            <person name="Degtyarev S.K."/>
            <person name="Dryden D.T."/>
            <person name="Dybvig K."/>
            <person name="Firman K."/>
            <person name="Gromova E.S."/>
            <person name="Gumport R.I."/>
            <person name="Halford S.E."/>
            <person name="Hattman S."/>
            <person name="Heitman J."/>
            <person name="Hornby D.P."/>
            <person name="Janulaitis A."/>
            <person name="Jeltsch A."/>
            <person name="Josephsen J."/>
            <person name="Kiss A."/>
            <person name="Klaenhammer T.R."/>
            <person name="Kobayashi I."/>
            <person name="Kong H."/>
            <person name="Krueger D.H."/>
            <person name="Lacks S."/>
            <person name="Marinus M.G."/>
            <person name="Miyahara M."/>
            <person name="Morgan R.D."/>
            <person name="Murray N.E."/>
            <person name="Nagaraja V."/>
            <person name="Piekarowicz A."/>
            <person name="Pingoud A."/>
            <person name="Raleigh E."/>
            <person name="Rao D.N."/>
            <person name="Reich N."/>
            <person name="Repin V.E."/>
            <person name="Selker E.U."/>
            <person name="Shaw P.C."/>
            <person name="Stein D.C."/>
            <person name="Stoddard B.L."/>
            <person name="Szybalski W."/>
            <person name="Trautner T.A."/>
            <person name="Van Etten J.L."/>
            <person name="Vitor J.M."/>
            <person name="Wilson G.G."/>
            <person name="Xu S.Y."/>
        </authorList>
    </citation>
    <scope>NOMENCLATURE</scope>
</reference>
<proteinExistence type="evidence at protein level"/>
<name>MCRA_ECOLI</name>
<gene>
    <name evidence="6" type="primary">mcrA</name>
    <name type="synonym">rglA</name>
    <name type="ordered locus">b1159</name>
    <name type="ordered locus">JW1145</name>
</gene>
<evidence type="ECO:0000269" key="1">
    <source>
    </source>
</evidence>
<evidence type="ECO:0000269" key="2">
    <source>
    </source>
</evidence>
<evidence type="ECO:0000269" key="3">
    <source>
    </source>
</evidence>
<evidence type="ECO:0000269" key="4">
    <source ref="2"/>
</evidence>
<evidence type="ECO:0000303" key="5">
    <source>
    </source>
</evidence>
<evidence type="ECO:0000303" key="6">
    <source>
    </source>
</evidence>
<evidence type="ECO:0007829" key="7">
    <source>
        <dbReference type="PDB" id="6GHC"/>
    </source>
</evidence>
<evidence type="ECO:0007829" key="8">
    <source>
        <dbReference type="PDB" id="6T21"/>
    </source>
</evidence>
<organism>
    <name type="scientific">Escherichia coli (strain K12)</name>
    <dbReference type="NCBI Taxonomy" id="83333"/>
    <lineage>
        <taxon>Bacteria</taxon>
        <taxon>Pseudomonadati</taxon>
        <taxon>Pseudomonadota</taxon>
        <taxon>Gammaproteobacteria</taxon>
        <taxon>Enterobacterales</taxon>
        <taxon>Enterobacteriaceae</taxon>
        <taxon>Escherichia</taxon>
    </lineage>
</organism>
<sequence>MHVFDNNGIELKAECSIGEEDGVYGLILESWGPGDRNKDYNIALDYIIERLVDSGVSQVVVYLASSSVRKHMHSLDERKIHPGEYFTLIGNSPRDIRLKMCGYQAYFSRTGRKEIPSGNRTKRILINVPGIYSDSFWASIIRGELSELSQPTDDESLLNMRVSKLIKKTLSQPEGSRKPVEVERLQKVYVRDPMVKAWILQQSKGICENCGKNAPFYLNDGNPYLEVHHVIPLSSGGADTTDNCVALCPNCHRELHYSKNAKELIEMLYVNINRLQK</sequence>
<dbReference type="EC" id="3.1.21.-"/>
<dbReference type="EMBL" id="M76667">
    <property type="protein sequence ID" value="AAA68481.1"/>
    <property type="molecule type" value="Genomic_DNA"/>
</dbReference>
<dbReference type="EMBL" id="Z19104">
    <property type="protein sequence ID" value="CAA79520.1"/>
    <property type="molecule type" value="Genomic_DNA"/>
</dbReference>
<dbReference type="EMBL" id="U00096">
    <property type="protein sequence ID" value="AAC74243.1"/>
    <property type="molecule type" value="Genomic_DNA"/>
</dbReference>
<dbReference type="EMBL" id="AP009048">
    <property type="protein sequence ID" value="BAA35995.1"/>
    <property type="molecule type" value="Genomic_DNA"/>
</dbReference>
<dbReference type="PIR" id="A41424">
    <property type="entry name" value="A41424"/>
</dbReference>
<dbReference type="RefSeq" id="NP_415677.1">
    <property type="nucleotide sequence ID" value="NC_000913.3"/>
</dbReference>
<dbReference type="RefSeq" id="WP_000557907.1">
    <property type="nucleotide sequence ID" value="NZ_CP064683.1"/>
</dbReference>
<dbReference type="PDB" id="6GHC">
    <property type="method" value="X-ray"/>
    <property type="resolution" value="2.85 A"/>
    <property type="chains" value="A/B=1-277"/>
</dbReference>
<dbReference type="PDB" id="6R64">
    <property type="method" value="X-ray"/>
    <property type="resolution" value="2.64 A"/>
    <property type="chains" value="A/B=1-143"/>
</dbReference>
<dbReference type="PDB" id="6T21">
    <property type="method" value="X-ray"/>
    <property type="resolution" value="2.07 A"/>
    <property type="chains" value="A/B=1-143"/>
</dbReference>
<dbReference type="PDB" id="6T22">
    <property type="method" value="X-ray"/>
    <property type="resolution" value="2.21 A"/>
    <property type="chains" value="A/B=1-143"/>
</dbReference>
<dbReference type="PDBsum" id="6GHC"/>
<dbReference type="PDBsum" id="6R64"/>
<dbReference type="PDBsum" id="6T21"/>
<dbReference type="PDBsum" id="6T22"/>
<dbReference type="SASBDB" id="P24200"/>
<dbReference type="SMR" id="P24200"/>
<dbReference type="BioGRID" id="4262863">
    <property type="interactions" value="150"/>
</dbReference>
<dbReference type="FunCoup" id="P24200">
    <property type="interactions" value="7"/>
</dbReference>
<dbReference type="IntAct" id="P24200">
    <property type="interactions" value="3"/>
</dbReference>
<dbReference type="STRING" id="511145.b1159"/>
<dbReference type="REBASE" id="13372">
    <property type="entry name" value="EcoW3110McrAP"/>
</dbReference>
<dbReference type="REBASE" id="155511">
    <property type="entry name" value="VscVS05ORF515P"/>
</dbReference>
<dbReference type="REBASE" id="2832">
    <property type="entry name" value="EcoKMcrA"/>
</dbReference>
<dbReference type="PaxDb" id="511145-b1159"/>
<dbReference type="EnsemblBacteria" id="AAC74243">
    <property type="protein sequence ID" value="AAC74243"/>
    <property type="gene ID" value="b1159"/>
</dbReference>
<dbReference type="GeneID" id="945727"/>
<dbReference type="KEGG" id="ecj:JW1145"/>
<dbReference type="KEGG" id="eco:b1159"/>
<dbReference type="PATRIC" id="fig|511145.12.peg.1200"/>
<dbReference type="EchoBASE" id="EB0568"/>
<dbReference type="eggNOG" id="COG1403">
    <property type="taxonomic scope" value="Bacteria"/>
</dbReference>
<dbReference type="HOGENOM" id="CLU_1003791_0_0_6"/>
<dbReference type="InParanoid" id="P24200"/>
<dbReference type="BioCyc" id="EcoCyc:EG10573-MONOMER"/>
<dbReference type="BioCyc" id="MetaCyc:EG10573-MONOMER"/>
<dbReference type="PRO" id="PR:P24200"/>
<dbReference type="Proteomes" id="UP000000625">
    <property type="component" value="Chromosome"/>
</dbReference>
<dbReference type="GO" id="GO:0004519">
    <property type="term" value="F:endonuclease activity"/>
    <property type="evidence" value="ECO:0007669"/>
    <property type="project" value="UniProtKB-KW"/>
</dbReference>
<dbReference type="GO" id="GO:0008327">
    <property type="term" value="F:methyl-CpG binding"/>
    <property type="evidence" value="ECO:0000314"/>
    <property type="project" value="EcoliWiki"/>
</dbReference>
<dbReference type="GO" id="GO:0008270">
    <property type="term" value="F:zinc ion binding"/>
    <property type="evidence" value="ECO:0007669"/>
    <property type="project" value="InterPro"/>
</dbReference>
<dbReference type="GO" id="GO:0009307">
    <property type="term" value="P:DNA restriction-modification system"/>
    <property type="evidence" value="ECO:0007669"/>
    <property type="project" value="UniProtKB-KW"/>
</dbReference>
<dbReference type="CDD" id="cd00085">
    <property type="entry name" value="HNHc"/>
    <property type="match status" value="1"/>
</dbReference>
<dbReference type="Gene3D" id="1.10.30.50">
    <property type="match status" value="1"/>
</dbReference>
<dbReference type="InterPro" id="IPR002711">
    <property type="entry name" value="HNH"/>
</dbReference>
<dbReference type="InterPro" id="IPR003615">
    <property type="entry name" value="HNH_nuc"/>
</dbReference>
<dbReference type="InterPro" id="IPR052892">
    <property type="entry name" value="NA-targeting_endonuclease"/>
</dbReference>
<dbReference type="PANTHER" id="PTHR33877">
    <property type="entry name" value="SLL1193 PROTEIN"/>
    <property type="match status" value="1"/>
</dbReference>
<dbReference type="PANTHER" id="PTHR33877:SF1">
    <property type="entry name" value="TYPE IV METHYL-DIRECTED RESTRICTION ENZYME ECOKMCRA"/>
    <property type="match status" value="1"/>
</dbReference>
<dbReference type="Pfam" id="PF01844">
    <property type="entry name" value="HNH"/>
    <property type="match status" value="1"/>
</dbReference>
<dbReference type="SMART" id="SM00507">
    <property type="entry name" value="HNHc"/>
    <property type="match status" value="1"/>
</dbReference>
<feature type="chain" id="PRO_0000077380" description="Type IV methyl-directed restriction enzyme EcoKMcrA">
    <location>
        <begin position="1"/>
        <end position="277"/>
    </location>
</feature>
<feature type="domain" description="HNH">
    <location>
        <begin position="207"/>
        <end position="257"/>
    </location>
</feature>
<feature type="strand" evidence="8">
    <location>
        <begin position="1"/>
        <end position="4"/>
    </location>
</feature>
<feature type="strand" evidence="8">
    <location>
        <begin position="10"/>
        <end position="20"/>
    </location>
</feature>
<feature type="strand" evidence="8">
    <location>
        <begin position="23"/>
        <end position="28"/>
    </location>
</feature>
<feature type="turn" evidence="8">
    <location>
        <begin position="34"/>
        <end position="39"/>
    </location>
</feature>
<feature type="helix" evidence="8">
    <location>
        <begin position="40"/>
        <end position="53"/>
    </location>
</feature>
<feature type="strand" evidence="8">
    <location>
        <begin position="58"/>
        <end position="63"/>
    </location>
</feature>
<feature type="helix" evidence="8">
    <location>
        <begin position="66"/>
        <end position="71"/>
    </location>
</feature>
<feature type="helix" evidence="8">
    <location>
        <begin position="75"/>
        <end position="78"/>
    </location>
</feature>
<feature type="strand" evidence="8">
    <location>
        <begin position="79"/>
        <end position="84"/>
    </location>
</feature>
<feature type="helix" evidence="8">
    <location>
        <begin position="93"/>
        <end position="102"/>
    </location>
</feature>
<feature type="helix" evidence="8">
    <location>
        <begin position="103"/>
        <end position="106"/>
    </location>
</feature>
<feature type="strand" evidence="8">
    <location>
        <begin position="109"/>
        <end position="112"/>
    </location>
</feature>
<feature type="strand" evidence="8">
    <location>
        <begin position="124"/>
        <end position="127"/>
    </location>
</feature>
<feature type="helix" evidence="8">
    <location>
        <begin position="134"/>
        <end position="142"/>
    </location>
</feature>
<feature type="helix" evidence="7">
    <location>
        <begin position="145"/>
        <end position="148"/>
    </location>
</feature>
<feature type="helix" evidence="7">
    <location>
        <begin position="155"/>
        <end position="167"/>
    </location>
</feature>
<feature type="strand" evidence="7">
    <location>
        <begin position="176"/>
        <end position="178"/>
    </location>
</feature>
<feature type="strand" evidence="7">
    <location>
        <begin position="181"/>
        <end position="189"/>
    </location>
</feature>
<feature type="helix" evidence="7">
    <location>
        <begin position="193"/>
        <end position="203"/>
    </location>
</feature>
<feature type="strand" evidence="7">
    <location>
        <begin position="208"/>
        <end position="210"/>
    </location>
</feature>
<feature type="strand" evidence="7">
    <location>
        <begin position="215"/>
        <end position="218"/>
    </location>
</feature>
<feature type="turn" evidence="7">
    <location>
        <begin position="219"/>
        <end position="221"/>
    </location>
</feature>
<feature type="strand" evidence="7">
    <location>
        <begin position="226"/>
        <end position="231"/>
    </location>
</feature>
<feature type="turn" evidence="7">
    <location>
        <begin position="233"/>
        <end position="236"/>
    </location>
</feature>
<feature type="helix" evidence="7">
    <location>
        <begin position="241"/>
        <end position="243"/>
    </location>
</feature>
<feature type="strand" evidence="7">
    <location>
        <begin position="244"/>
        <end position="247"/>
    </location>
</feature>
<feature type="helix" evidence="7">
    <location>
        <begin position="249"/>
        <end position="257"/>
    </location>
</feature>
<feature type="helix" evidence="7">
    <location>
        <begin position="261"/>
        <end position="271"/>
    </location>
</feature>